<protein>
    <recommendedName>
        <fullName evidence="2">Large ribosomal subunit protein bL27</fullName>
    </recommendedName>
    <alternativeName>
        <fullName evidence="3">50S ribosomal protein L27</fullName>
    </alternativeName>
</protein>
<evidence type="ECO:0000250" key="1">
    <source>
        <dbReference type="UniProtKB" id="Q2FXT0"/>
    </source>
</evidence>
<evidence type="ECO:0000255" key="2">
    <source>
        <dbReference type="HAMAP-Rule" id="MF_00539"/>
    </source>
</evidence>
<evidence type="ECO:0000305" key="3"/>
<comment type="PTM">
    <text evidence="1">The N-terminus is cleaved by ribosomal processing cysteine protease Prp.</text>
</comment>
<comment type="similarity">
    <text evidence="2">Belongs to the bacterial ribosomal protein bL27 family.</text>
</comment>
<accession>Q8CS89</accession>
<keyword id="KW-0687">Ribonucleoprotein</keyword>
<keyword id="KW-0689">Ribosomal protein</keyword>
<feature type="propeptide" id="PRO_0000459941" evidence="1">
    <location>
        <begin position="1"/>
        <end position="9"/>
    </location>
</feature>
<feature type="chain" id="PRO_0000181170" description="Large ribosomal subunit protein bL27">
    <location>
        <begin position="10"/>
        <end position="94"/>
    </location>
</feature>
<reference key="1">
    <citation type="journal article" date="2003" name="Mol. Microbiol.">
        <title>Genome-based analysis of virulence genes in a non-biofilm-forming Staphylococcus epidermidis strain (ATCC 12228).</title>
        <authorList>
            <person name="Zhang Y.-Q."/>
            <person name="Ren S.-X."/>
            <person name="Li H.-L."/>
            <person name="Wang Y.-X."/>
            <person name="Fu G."/>
            <person name="Yang J."/>
            <person name="Qin Z.-Q."/>
            <person name="Miao Y.-G."/>
            <person name="Wang W.-Y."/>
            <person name="Chen R.-S."/>
            <person name="Shen Y."/>
            <person name="Chen Z."/>
            <person name="Yuan Z.-H."/>
            <person name="Zhao G.-P."/>
            <person name="Qu D."/>
            <person name="Danchin A."/>
            <person name="Wen Y.-M."/>
        </authorList>
    </citation>
    <scope>NUCLEOTIDE SEQUENCE [LARGE SCALE GENOMIC DNA]</scope>
    <source>
        <strain>ATCC 12228 / FDA PCI 1200</strain>
    </source>
</reference>
<sequence length="94" mass="10317">MLKLNLQFFASKKGVSSTKNGRDSESKRLGAKRADGQYVSGGSILYRQRGTKIYPGENVGRGGDDTLFAKIDGVVKFERKGRDKKQVSVYAVAE</sequence>
<dbReference type="EMBL" id="AE015929">
    <property type="protein sequence ID" value="AAO04927.1"/>
    <property type="molecule type" value="Genomic_DNA"/>
</dbReference>
<dbReference type="RefSeq" id="NP_764883.1">
    <property type="nucleotide sequence ID" value="NC_004461.1"/>
</dbReference>
<dbReference type="RefSeq" id="WP_001830822.1">
    <property type="nucleotide sequence ID" value="NZ_WBME01000016.1"/>
</dbReference>
<dbReference type="SMR" id="Q8CS89"/>
<dbReference type="GeneID" id="93669336"/>
<dbReference type="KEGG" id="sep:SE_1328"/>
<dbReference type="PATRIC" id="fig|176280.10.peg.1297"/>
<dbReference type="eggNOG" id="COG0211">
    <property type="taxonomic scope" value="Bacteria"/>
</dbReference>
<dbReference type="HOGENOM" id="CLU_095424_4_0_9"/>
<dbReference type="OrthoDB" id="9803474at2"/>
<dbReference type="PRO" id="PR:Q8CS89"/>
<dbReference type="Proteomes" id="UP000001411">
    <property type="component" value="Chromosome"/>
</dbReference>
<dbReference type="GO" id="GO:0022625">
    <property type="term" value="C:cytosolic large ribosomal subunit"/>
    <property type="evidence" value="ECO:0007669"/>
    <property type="project" value="TreeGrafter"/>
</dbReference>
<dbReference type="GO" id="GO:0003735">
    <property type="term" value="F:structural constituent of ribosome"/>
    <property type="evidence" value="ECO:0007669"/>
    <property type="project" value="InterPro"/>
</dbReference>
<dbReference type="GO" id="GO:0006412">
    <property type="term" value="P:translation"/>
    <property type="evidence" value="ECO:0007669"/>
    <property type="project" value="UniProtKB-UniRule"/>
</dbReference>
<dbReference type="FunFam" id="2.40.50.100:FF:000004">
    <property type="entry name" value="50S ribosomal protein L27"/>
    <property type="match status" value="1"/>
</dbReference>
<dbReference type="Gene3D" id="2.40.50.100">
    <property type="match status" value="1"/>
</dbReference>
<dbReference type="HAMAP" id="MF_00539">
    <property type="entry name" value="Ribosomal_bL27"/>
    <property type="match status" value="1"/>
</dbReference>
<dbReference type="InterPro" id="IPR001684">
    <property type="entry name" value="Ribosomal_bL27"/>
</dbReference>
<dbReference type="InterPro" id="IPR018261">
    <property type="entry name" value="Ribosomal_bL27_CS"/>
</dbReference>
<dbReference type="NCBIfam" id="TIGR00062">
    <property type="entry name" value="L27"/>
    <property type="match status" value="1"/>
</dbReference>
<dbReference type="PANTHER" id="PTHR15893:SF0">
    <property type="entry name" value="LARGE RIBOSOMAL SUBUNIT PROTEIN BL27M"/>
    <property type="match status" value="1"/>
</dbReference>
<dbReference type="PANTHER" id="PTHR15893">
    <property type="entry name" value="RIBOSOMAL PROTEIN L27"/>
    <property type="match status" value="1"/>
</dbReference>
<dbReference type="Pfam" id="PF01016">
    <property type="entry name" value="Ribosomal_L27"/>
    <property type="match status" value="1"/>
</dbReference>
<dbReference type="PRINTS" id="PR00063">
    <property type="entry name" value="RIBOSOMALL27"/>
</dbReference>
<dbReference type="SUPFAM" id="SSF110324">
    <property type="entry name" value="Ribosomal L27 protein-like"/>
    <property type="match status" value="1"/>
</dbReference>
<dbReference type="PROSITE" id="PS00831">
    <property type="entry name" value="RIBOSOMAL_L27"/>
    <property type="match status" value="1"/>
</dbReference>
<organism>
    <name type="scientific">Staphylococcus epidermidis (strain ATCC 12228 / FDA PCI 1200)</name>
    <dbReference type="NCBI Taxonomy" id="176280"/>
    <lineage>
        <taxon>Bacteria</taxon>
        <taxon>Bacillati</taxon>
        <taxon>Bacillota</taxon>
        <taxon>Bacilli</taxon>
        <taxon>Bacillales</taxon>
        <taxon>Staphylococcaceae</taxon>
        <taxon>Staphylococcus</taxon>
    </lineage>
</organism>
<gene>
    <name evidence="2" type="primary">rpmA</name>
    <name type="ordered locus">SE_1328</name>
</gene>
<proteinExistence type="inferred from homology"/>
<name>RL27_STAES</name>